<sequence length="256" mass="28144">MAALELDLFLCRTDNYGVLLHDRLSGATASIDAPEERPILDALERRGWQLTHILTTHHHGDHVAANASLKERFGLTIIGPKNEASKIPGIDRTVGHGDRFDFAGHPVDVIETPGHTSGHVCYHLPEDKLLFAADTLFALGCGRLFEGTADTMWQSLSRLMALPDDTAIYFGHEYTLANAHFAITVDPENSALKERAAEIEETRSDGGFTAPTTMGLEKRTNPFLRAGDPKIRALLGMEKASDAAVFAEIRKRKDNF</sequence>
<evidence type="ECO:0000255" key="1">
    <source>
        <dbReference type="HAMAP-Rule" id="MF_01374"/>
    </source>
</evidence>
<name>GLO2_RHIME</name>
<accession>Q92MF8</accession>
<proteinExistence type="inferred from homology"/>
<comment type="function">
    <text evidence="1">Thiolesterase that catalyzes the hydrolysis of S-D-lactoyl-glutathione to form glutathione and D-lactic acid.</text>
</comment>
<comment type="catalytic activity">
    <reaction evidence="1">
        <text>an S-(2-hydroxyacyl)glutathione + H2O = a 2-hydroxy carboxylate + glutathione + H(+)</text>
        <dbReference type="Rhea" id="RHEA:21864"/>
        <dbReference type="ChEBI" id="CHEBI:15377"/>
        <dbReference type="ChEBI" id="CHEBI:15378"/>
        <dbReference type="ChEBI" id="CHEBI:57925"/>
        <dbReference type="ChEBI" id="CHEBI:58896"/>
        <dbReference type="ChEBI" id="CHEBI:71261"/>
        <dbReference type="EC" id="3.1.2.6"/>
    </reaction>
</comment>
<comment type="cofactor">
    <cofactor evidence="1">
        <name>Zn(2+)</name>
        <dbReference type="ChEBI" id="CHEBI:29105"/>
    </cofactor>
    <text evidence="1">Binds 2 Zn(2+) ions per subunit.</text>
</comment>
<comment type="pathway">
    <text evidence="1">Secondary metabolite metabolism; methylglyoxal degradation; (R)-lactate from methylglyoxal: step 2/2.</text>
</comment>
<comment type="subunit">
    <text evidence="1">Monomer.</text>
</comment>
<comment type="similarity">
    <text evidence="1">Belongs to the metallo-beta-lactamase superfamily. Glyoxalase II family.</text>
</comment>
<organism>
    <name type="scientific">Rhizobium meliloti (strain 1021)</name>
    <name type="common">Ensifer meliloti</name>
    <name type="synonym">Sinorhizobium meliloti</name>
    <dbReference type="NCBI Taxonomy" id="266834"/>
    <lineage>
        <taxon>Bacteria</taxon>
        <taxon>Pseudomonadati</taxon>
        <taxon>Pseudomonadota</taxon>
        <taxon>Alphaproteobacteria</taxon>
        <taxon>Hyphomicrobiales</taxon>
        <taxon>Rhizobiaceae</taxon>
        <taxon>Sinorhizobium/Ensifer group</taxon>
        <taxon>Sinorhizobium</taxon>
    </lineage>
</organism>
<dbReference type="EC" id="3.1.2.6" evidence="1"/>
<dbReference type="EMBL" id="AL591688">
    <property type="protein sequence ID" value="CAC47243.1"/>
    <property type="molecule type" value="Genomic_DNA"/>
</dbReference>
<dbReference type="RefSeq" id="NP_386770.1">
    <property type="nucleotide sequence ID" value="NC_003047.1"/>
</dbReference>
<dbReference type="RefSeq" id="WP_003527442.1">
    <property type="nucleotide sequence ID" value="NC_003047.1"/>
</dbReference>
<dbReference type="SMR" id="Q92MF8"/>
<dbReference type="EnsemblBacteria" id="CAC47243">
    <property type="protein sequence ID" value="CAC47243"/>
    <property type="gene ID" value="SMc00708"/>
</dbReference>
<dbReference type="KEGG" id="sme:SMc00708"/>
<dbReference type="PATRIC" id="fig|266834.11.peg.4164"/>
<dbReference type="eggNOG" id="COG0491">
    <property type="taxonomic scope" value="Bacteria"/>
</dbReference>
<dbReference type="HOGENOM" id="CLU_030571_4_1_5"/>
<dbReference type="OrthoDB" id="9802248at2"/>
<dbReference type="UniPathway" id="UPA00619">
    <property type="reaction ID" value="UER00676"/>
</dbReference>
<dbReference type="Proteomes" id="UP000001976">
    <property type="component" value="Chromosome"/>
</dbReference>
<dbReference type="GO" id="GO:0004416">
    <property type="term" value="F:hydroxyacylglutathione hydrolase activity"/>
    <property type="evidence" value="ECO:0007669"/>
    <property type="project" value="UniProtKB-UniRule"/>
</dbReference>
<dbReference type="GO" id="GO:0046872">
    <property type="term" value="F:metal ion binding"/>
    <property type="evidence" value="ECO:0007669"/>
    <property type="project" value="UniProtKB-KW"/>
</dbReference>
<dbReference type="GO" id="GO:0019243">
    <property type="term" value="P:methylglyoxal catabolic process to D-lactate via S-lactoyl-glutathione"/>
    <property type="evidence" value="ECO:0007669"/>
    <property type="project" value="InterPro"/>
</dbReference>
<dbReference type="CDD" id="cd07723">
    <property type="entry name" value="hydroxyacylglutathione_hydrolase_MBL-fold"/>
    <property type="match status" value="1"/>
</dbReference>
<dbReference type="Gene3D" id="3.60.15.10">
    <property type="entry name" value="Ribonuclease Z/Hydroxyacylglutathione hydrolase-like"/>
    <property type="match status" value="1"/>
</dbReference>
<dbReference type="HAMAP" id="MF_01374">
    <property type="entry name" value="Glyoxalase_2"/>
    <property type="match status" value="1"/>
</dbReference>
<dbReference type="InterPro" id="IPR035680">
    <property type="entry name" value="Clx_II_MBL"/>
</dbReference>
<dbReference type="InterPro" id="IPR050110">
    <property type="entry name" value="Glyoxalase_II_hydrolase"/>
</dbReference>
<dbReference type="InterPro" id="IPR032282">
    <property type="entry name" value="HAGH_C"/>
</dbReference>
<dbReference type="InterPro" id="IPR017782">
    <property type="entry name" value="Hydroxyacylglutathione_Hdrlase"/>
</dbReference>
<dbReference type="InterPro" id="IPR001279">
    <property type="entry name" value="Metallo-B-lactamas"/>
</dbReference>
<dbReference type="InterPro" id="IPR036866">
    <property type="entry name" value="RibonucZ/Hydroxyglut_hydro"/>
</dbReference>
<dbReference type="NCBIfam" id="TIGR03413">
    <property type="entry name" value="GSH_gloB"/>
    <property type="match status" value="1"/>
</dbReference>
<dbReference type="PANTHER" id="PTHR43705">
    <property type="entry name" value="HYDROXYACYLGLUTATHIONE HYDROLASE"/>
    <property type="match status" value="1"/>
</dbReference>
<dbReference type="PANTHER" id="PTHR43705:SF1">
    <property type="entry name" value="HYDROXYACYLGLUTATHIONE HYDROLASE GLOB"/>
    <property type="match status" value="1"/>
</dbReference>
<dbReference type="Pfam" id="PF16123">
    <property type="entry name" value="HAGH_C"/>
    <property type="match status" value="1"/>
</dbReference>
<dbReference type="Pfam" id="PF00753">
    <property type="entry name" value="Lactamase_B"/>
    <property type="match status" value="1"/>
</dbReference>
<dbReference type="PIRSF" id="PIRSF005457">
    <property type="entry name" value="Glx"/>
    <property type="match status" value="1"/>
</dbReference>
<dbReference type="SMART" id="SM00849">
    <property type="entry name" value="Lactamase_B"/>
    <property type="match status" value="1"/>
</dbReference>
<dbReference type="SUPFAM" id="SSF56281">
    <property type="entry name" value="Metallo-hydrolase/oxidoreductase"/>
    <property type="match status" value="1"/>
</dbReference>
<reference key="1">
    <citation type="journal article" date="2001" name="Proc. Natl. Acad. Sci. U.S.A.">
        <title>Analysis of the chromosome sequence of the legume symbiont Sinorhizobium meliloti strain 1021.</title>
        <authorList>
            <person name="Capela D."/>
            <person name="Barloy-Hubler F."/>
            <person name="Gouzy J."/>
            <person name="Bothe G."/>
            <person name="Ampe F."/>
            <person name="Batut J."/>
            <person name="Boistard P."/>
            <person name="Becker A."/>
            <person name="Boutry M."/>
            <person name="Cadieu E."/>
            <person name="Dreano S."/>
            <person name="Gloux S."/>
            <person name="Godrie T."/>
            <person name="Goffeau A."/>
            <person name="Kahn D."/>
            <person name="Kiss E."/>
            <person name="Lelaure V."/>
            <person name="Masuy D."/>
            <person name="Pohl T."/>
            <person name="Portetelle D."/>
            <person name="Puehler A."/>
            <person name="Purnelle B."/>
            <person name="Ramsperger U."/>
            <person name="Renard C."/>
            <person name="Thebault P."/>
            <person name="Vandenbol M."/>
            <person name="Weidner S."/>
            <person name="Galibert F."/>
        </authorList>
    </citation>
    <scope>NUCLEOTIDE SEQUENCE [LARGE SCALE GENOMIC DNA]</scope>
    <source>
        <strain>1021</strain>
    </source>
</reference>
<reference key="2">
    <citation type="journal article" date="2001" name="Science">
        <title>The composite genome of the legume symbiont Sinorhizobium meliloti.</title>
        <authorList>
            <person name="Galibert F."/>
            <person name="Finan T.M."/>
            <person name="Long S.R."/>
            <person name="Puehler A."/>
            <person name="Abola P."/>
            <person name="Ampe F."/>
            <person name="Barloy-Hubler F."/>
            <person name="Barnett M.J."/>
            <person name="Becker A."/>
            <person name="Boistard P."/>
            <person name="Bothe G."/>
            <person name="Boutry M."/>
            <person name="Bowser L."/>
            <person name="Buhrmester J."/>
            <person name="Cadieu E."/>
            <person name="Capela D."/>
            <person name="Chain P."/>
            <person name="Cowie A."/>
            <person name="Davis R.W."/>
            <person name="Dreano S."/>
            <person name="Federspiel N.A."/>
            <person name="Fisher R.F."/>
            <person name="Gloux S."/>
            <person name="Godrie T."/>
            <person name="Goffeau A."/>
            <person name="Golding B."/>
            <person name="Gouzy J."/>
            <person name="Gurjal M."/>
            <person name="Hernandez-Lucas I."/>
            <person name="Hong A."/>
            <person name="Huizar L."/>
            <person name="Hyman R.W."/>
            <person name="Jones T."/>
            <person name="Kahn D."/>
            <person name="Kahn M.L."/>
            <person name="Kalman S."/>
            <person name="Keating D.H."/>
            <person name="Kiss E."/>
            <person name="Komp C."/>
            <person name="Lelaure V."/>
            <person name="Masuy D."/>
            <person name="Palm C."/>
            <person name="Peck M.C."/>
            <person name="Pohl T.M."/>
            <person name="Portetelle D."/>
            <person name="Purnelle B."/>
            <person name="Ramsperger U."/>
            <person name="Surzycki R."/>
            <person name="Thebault P."/>
            <person name="Vandenbol M."/>
            <person name="Vorhoelter F.J."/>
            <person name="Weidner S."/>
            <person name="Wells D.H."/>
            <person name="Wong K."/>
            <person name="Yeh K.-C."/>
            <person name="Batut J."/>
        </authorList>
    </citation>
    <scope>NUCLEOTIDE SEQUENCE [LARGE SCALE GENOMIC DNA]</scope>
    <source>
        <strain>1021</strain>
    </source>
</reference>
<gene>
    <name evidence="1" type="primary">gloB</name>
    <name type="ordered locus">R02664</name>
    <name type="ORF">SMc00708</name>
</gene>
<keyword id="KW-0378">Hydrolase</keyword>
<keyword id="KW-0479">Metal-binding</keyword>
<keyword id="KW-1185">Reference proteome</keyword>
<keyword id="KW-0862">Zinc</keyword>
<protein>
    <recommendedName>
        <fullName evidence="1">Hydroxyacylglutathione hydrolase</fullName>
        <ecNumber evidence="1">3.1.2.6</ecNumber>
    </recommendedName>
    <alternativeName>
        <fullName evidence="1">Glyoxalase II</fullName>
        <shortName evidence="1">Glx II</shortName>
    </alternativeName>
</protein>
<feature type="chain" id="PRO_0000309688" description="Hydroxyacylglutathione hydrolase">
    <location>
        <begin position="1"/>
        <end position="256"/>
    </location>
</feature>
<feature type="binding site" evidence="1">
    <location>
        <position position="57"/>
    </location>
    <ligand>
        <name>Zn(2+)</name>
        <dbReference type="ChEBI" id="CHEBI:29105"/>
        <label>1</label>
    </ligand>
</feature>
<feature type="binding site" evidence="1">
    <location>
        <position position="59"/>
    </location>
    <ligand>
        <name>Zn(2+)</name>
        <dbReference type="ChEBI" id="CHEBI:29105"/>
        <label>1</label>
    </ligand>
</feature>
<feature type="binding site" evidence="1">
    <location>
        <position position="61"/>
    </location>
    <ligand>
        <name>Zn(2+)</name>
        <dbReference type="ChEBI" id="CHEBI:29105"/>
        <label>2</label>
    </ligand>
</feature>
<feature type="binding site" evidence="1">
    <location>
        <position position="62"/>
    </location>
    <ligand>
        <name>Zn(2+)</name>
        <dbReference type="ChEBI" id="CHEBI:29105"/>
        <label>2</label>
    </ligand>
</feature>
<feature type="binding site" evidence="1">
    <location>
        <position position="115"/>
    </location>
    <ligand>
        <name>Zn(2+)</name>
        <dbReference type="ChEBI" id="CHEBI:29105"/>
        <label>1</label>
    </ligand>
</feature>
<feature type="binding site" evidence="1">
    <location>
        <position position="134"/>
    </location>
    <ligand>
        <name>Zn(2+)</name>
        <dbReference type="ChEBI" id="CHEBI:29105"/>
        <label>1</label>
    </ligand>
</feature>
<feature type="binding site" evidence="1">
    <location>
        <position position="134"/>
    </location>
    <ligand>
        <name>Zn(2+)</name>
        <dbReference type="ChEBI" id="CHEBI:29105"/>
        <label>2</label>
    </ligand>
</feature>
<feature type="binding site" evidence="1">
    <location>
        <position position="172"/>
    </location>
    <ligand>
        <name>Zn(2+)</name>
        <dbReference type="ChEBI" id="CHEBI:29105"/>
        <label>2</label>
    </ligand>
</feature>